<protein>
    <recommendedName>
        <fullName evidence="1">Oligoribonuclease</fullName>
        <ecNumber evidence="1">3.1.15.-</ecNumber>
    </recommendedName>
</protein>
<feature type="chain" id="PRO_1000004295" description="Oligoribonuclease">
    <location>
        <begin position="1"/>
        <end position="182"/>
    </location>
</feature>
<feature type="domain" description="Exonuclease" evidence="1">
    <location>
        <begin position="8"/>
        <end position="171"/>
    </location>
</feature>
<feature type="active site" evidence="1">
    <location>
        <position position="129"/>
    </location>
</feature>
<name>ORN_THIDA</name>
<proteinExistence type="inferred from homology"/>
<dbReference type="EC" id="3.1.15.-" evidence="1"/>
<dbReference type="EMBL" id="CP000116">
    <property type="protein sequence ID" value="AAZ97792.1"/>
    <property type="molecule type" value="Genomic_DNA"/>
</dbReference>
<dbReference type="RefSeq" id="WP_011312351.1">
    <property type="nucleotide sequence ID" value="NC_007404.1"/>
</dbReference>
<dbReference type="SMR" id="Q3SHU1"/>
<dbReference type="STRING" id="292415.Tbd_1839"/>
<dbReference type="KEGG" id="tbd:Tbd_1839"/>
<dbReference type="eggNOG" id="COG1949">
    <property type="taxonomic scope" value="Bacteria"/>
</dbReference>
<dbReference type="HOGENOM" id="CLU_064761_2_0_4"/>
<dbReference type="OrthoDB" id="9801329at2"/>
<dbReference type="Proteomes" id="UP000008291">
    <property type="component" value="Chromosome"/>
</dbReference>
<dbReference type="GO" id="GO:0005737">
    <property type="term" value="C:cytoplasm"/>
    <property type="evidence" value="ECO:0007669"/>
    <property type="project" value="UniProtKB-SubCell"/>
</dbReference>
<dbReference type="GO" id="GO:0000175">
    <property type="term" value="F:3'-5'-RNA exonuclease activity"/>
    <property type="evidence" value="ECO:0007669"/>
    <property type="project" value="InterPro"/>
</dbReference>
<dbReference type="GO" id="GO:0003676">
    <property type="term" value="F:nucleic acid binding"/>
    <property type="evidence" value="ECO:0007669"/>
    <property type="project" value="InterPro"/>
</dbReference>
<dbReference type="GO" id="GO:0006259">
    <property type="term" value="P:DNA metabolic process"/>
    <property type="evidence" value="ECO:0007669"/>
    <property type="project" value="UniProtKB-ARBA"/>
</dbReference>
<dbReference type="CDD" id="cd06135">
    <property type="entry name" value="Orn"/>
    <property type="match status" value="1"/>
</dbReference>
<dbReference type="FunFam" id="3.30.420.10:FF:000003">
    <property type="entry name" value="Oligoribonuclease"/>
    <property type="match status" value="1"/>
</dbReference>
<dbReference type="Gene3D" id="3.30.420.10">
    <property type="entry name" value="Ribonuclease H-like superfamily/Ribonuclease H"/>
    <property type="match status" value="1"/>
</dbReference>
<dbReference type="HAMAP" id="MF_00045">
    <property type="entry name" value="Oligoribonuclease"/>
    <property type="match status" value="1"/>
</dbReference>
<dbReference type="InterPro" id="IPR013520">
    <property type="entry name" value="Exonuclease_RNaseT/DNA_pol3"/>
</dbReference>
<dbReference type="InterPro" id="IPR022894">
    <property type="entry name" value="Oligoribonuclease"/>
</dbReference>
<dbReference type="InterPro" id="IPR012337">
    <property type="entry name" value="RNaseH-like_sf"/>
</dbReference>
<dbReference type="InterPro" id="IPR036397">
    <property type="entry name" value="RNaseH_sf"/>
</dbReference>
<dbReference type="NCBIfam" id="NF003765">
    <property type="entry name" value="PRK05359.1"/>
    <property type="match status" value="1"/>
</dbReference>
<dbReference type="PANTHER" id="PTHR11046">
    <property type="entry name" value="OLIGORIBONUCLEASE, MITOCHONDRIAL"/>
    <property type="match status" value="1"/>
</dbReference>
<dbReference type="PANTHER" id="PTHR11046:SF0">
    <property type="entry name" value="OLIGORIBONUCLEASE, MITOCHONDRIAL"/>
    <property type="match status" value="1"/>
</dbReference>
<dbReference type="Pfam" id="PF00929">
    <property type="entry name" value="RNase_T"/>
    <property type="match status" value="1"/>
</dbReference>
<dbReference type="SMART" id="SM00479">
    <property type="entry name" value="EXOIII"/>
    <property type="match status" value="1"/>
</dbReference>
<dbReference type="SUPFAM" id="SSF53098">
    <property type="entry name" value="Ribonuclease H-like"/>
    <property type="match status" value="1"/>
</dbReference>
<keyword id="KW-0963">Cytoplasm</keyword>
<keyword id="KW-0269">Exonuclease</keyword>
<keyword id="KW-0378">Hydrolase</keyword>
<keyword id="KW-0540">Nuclease</keyword>
<keyword id="KW-1185">Reference proteome</keyword>
<evidence type="ECO:0000255" key="1">
    <source>
        <dbReference type="HAMAP-Rule" id="MF_00045"/>
    </source>
</evidence>
<gene>
    <name evidence="1" type="primary">orn</name>
    <name type="ordered locus">Tbd_1839</name>
</gene>
<sequence length="182" mass="20815">MALNPTHLLWLDMEMTGLSPESDRIIELAIVVTDADLNTVAEGPVLVVHQPDAVMDAMDSWNRGTHGKSGLIDRVKASQLSESDAEAQMLEFVKQHVSPRTSPMCGNSICQDRRFMARHMPELEAFFHYRNLDVSTLKELAKRWRPGLCDAFKKSNKHEALADIYESIDELRYYREHFIRAE</sequence>
<comment type="function">
    <text evidence="1">3'-to-5' exoribonuclease specific for small oligoribonucleotides.</text>
</comment>
<comment type="subcellular location">
    <subcellularLocation>
        <location evidence="1">Cytoplasm</location>
    </subcellularLocation>
</comment>
<comment type="similarity">
    <text evidence="1">Belongs to the oligoribonuclease family.</text>
</comment>
<accession>Q3SHU1</accession>
<reference key="1">
    <citation type="journal article" date="2006" name="J. Bacteriol.">
        <title>The genome sequence of the obligately chemolithoautotrophic, facultatively anaerobic bacterium Thiobacillus denitrificans.</title>
        <authorList>
            <person name="Beller H.R."/>
            <person name="Chain P.S."/>
            <person name="Letain T.E."/>
            <person name="Chakicherla A."/>
            <person name="Larimer F.W."/>
            <person name="Richardson P.M."/>
            <person name="Coleman M.A."/>
            <person name="Wood A.P."/>
            <person name="Kelly D.P."/>
        </authorList>
    </citation>
    <scope>NUCLEOTIDE SEQUENCE [LARGE SCALE GENOMIC DNA]</scope>
    <source>
        <strain>ATCC 25259 / T1</strain>
    </source>
</reference>
<organism>
    <name type="scientific">Thiobacillus denitrificans (strain ATCC 25259 / T1)</name>
    <dbReference type="NCBI Taxonomy" id="292415"/>
    <lineage>
        <taxon>Bacteria</taxon>
        <taxon>Pseudomonadati</taxon>
        <taxon>Pseudomonadota</taxon>
        <taxon>Betaproteobacteria</taxon>
        <taxon>Nitrosomonadales</taxon>
        <taxon>Thiobacillaceae</taxon>
        <taxon>Thiobacillus</taxon>
    </lineage>
</organism>